<dbReference type="EMBL" id="AJ293583">
    <property type="protein sequence ID" value="CAC10571.1"/>
    <property type="molecule type" value="mRNA"/>
</dbReference>
<dbReference type="RefSeq" id="NP_999106.1">
    <property type="nucleotide sequence ID" value="NM_213941.1"/>
</dbReference>
<dbReference type="SMR" id="Q9GL01"/>
<dbReference type="FunCoup" id="Q9GL01">
    <property type="interactions" value="1409"/>
</dbReference>
<dbReference type="STRING" id="9823.ENSSSCP00000026694"/>
<dbReference type="GlyCosmos" id="Q9GL01">
    <property type="glycosylation" value="1 site, No reported glycans"/>
</dbReference>
<dbReference type="GlyGen" id="Q9GL01">
    <property type="glycosylation" value="1 site"/>
</dbReference>
<dbReference type="PaxDb" id="9823-ENSSSCP00000026694"/>
<dbReference type="PeptideAtlas" id="Q9GL01"/>
<dbReference type="GeneID" id="100154432"/>
<dbReference type="KEGG" id="ssc:100154432"/>
<dbReference type="CTD" id="6185"/>
<dbReference type="eggNOG" id="KOG2447">
    <property type="taxonomic scope" value="Eukaryota"/>
</dbReference>
<dbReference type="InParanoid" id="Q9GL01"/>
<dbReference type="OrthoDB" id="432292at2759"/>
<dbReference type="UniPathway" id="UPA00378"/>
<dbReference type="Proteomes" id="UP000008227">
    <property type="component" value="Unplaced"/>
</dbReference>
<dbReference type="Proteomes" id="UP000314985">
    <property type="component" value="Unplaced"/>
</dbReference>
<dbReference type="Proteomes" id="UP000694570">
    <property type="component" value="Unplaced"/>
</dbReference>
<dbReference type="Proteomes" id="UP000694571">
    <property type="component" value="Unplaced"/>
</dbReference>
<dbReference type="Proteomes" id="UP000694720">
    <property type="component" value="Unplaced"/>
</dbReference>
<dbReference type="Proteomes" id="UP000694722">
    <property type="component" value="Unplaced"/>
</dbReference>
<dbReference type="Proteomes" id="UP000694723">
    <property type="component" value="Unplaced"/>
</dbReference>
<dbReference type="Proteomes" id="UP000694724">
    <property type="component" value="Unplaced"/>
</dbReference>
<dbReference type="Proteomes" id="UP000694725">
    <property type="component" value="Unplaced"/>
</dbReference>
<dbReference type="Proteomes" id="UP000694726">
    <property type="component" value="Unplaced"/>
</dbReference>
<dbReference type="Proteomes" id="UP000694727">
    <property type="component" value="Unplaced"/>
</dbReference>
<dbReference type="Proteomes" id="UP000694728">
    <property type="component" value="Unplaced"/>
</dbReference>
<dbReference type="GO" id="GO:0008250">
    <property type="term" value="C:oligosaccharyltransferase complex"/>
    <property type="evidence" value="ECO:0000318"/>
    <property type="project" value="GO_Central"/>
</dbReference>
<dbReference type="GO" id="GO:0006487">
    <property type="term" value="P:protein N-linked glycosylation"/>
    <property type="evidence" value="ECO:0000318"/>
    <property type="project" value="GO_Central"/>
</dbReference>
<dbReference type="InterPro" id="IPR055375">
    <property type="entry name" value="Ribophorin_II_2nd"/>
</dbReference>
<dbReference type="InterPro" id="IPR055374">
    <property type="entry name" value="Ribophorin_II_3rd"/>
</dbReference>
<dbReference type="InterPro" id="IPR056790">
    <property type="entry name" value="Ribophorin_II_C"/>
</dbReference>
<dbReference type="InterPro" id="IPR055373">
    <property type="entry name" value="Ribophorin_II_N"/>
</dbReference>
<dbReference type="InterPro" id="IPR008814">
    <property type="entry name" value="Swp1"/>
</dbReference>
<dbReference type="PANTHER" id="PTHR12640:SF0">
    <property type="entry name" value="DOLICHYL-DIPHOSPHOOLIGOSACCHARIDE--PROTEIN GLYCOSYLTRANSFERASE SUBUNIT 2"/>
    <property type="match status" value="1"/>
</dbReference>
<dbReference type="PANTHER" id="PTHR12640">
    <property type="entry name" value="RIBOPHORIN II"/>
    <property type="match status" value="1"/>
</dbReference>
<dbReference type="Pfam" id="PF05817">
    <property type="entry name" value="Ribophorin_II"/>
    <property type="match status" value="1"/>
</dbReference>
<dbReference type="Pfam" id="PF23861">
    <property type="entry name" value="Ribophorin_II_2nd"/>
    <property type="match status" value="1"/>
</dbReference>
<dbReference type="Pfam" id="PF23860">
    <property type="entry name" value="Ribophorin_II_3rd"/>
    <property type="match status" value="1"/>
</dbReference>
<dbReference type="Pfam" id="PF25147">
    <property type="entry name" value="Ribophorin_II_C"/>
    <property type="match status" value="1"/>
</dbReference>
<keyword id="KW-0256">Endoplasmic reticulum</keyword>
<keyword id="KW-0325">Glycoprotein</keyword>
<keyword id="KW-1017">Isopeptide bond</keyword>
<keyword id="KW-0472">Membrane</keyword>
<keyword id="KW-1185">Reference proteome</keyword>
<keyword id="KW-0732">Signal</keyword>
<keyword id="KW-0812">Transmembrane</keyword>
<keyword id="KW-1133">Transmembrane helix</keyword>
<keyword id="KW-0832">Ubl conjugation</keyword>
<name>RPN2_PIG</name>
<gene>
    <name evidence="2" type="primary">RPN2</name>
</gene>
<evidence type="ECO:0000250" key="1">
    <source>
        <dbReference type="UniProtKB" id="F1PCT7"/>
    </source>
</evidence>
<evidence type="ECO:0000250" key="2">
    <source>
        <dbReference type="UniProtKB" id="P04844"/>
    </source>
</evidence>
<evidence type="ECO:0000250" key="3">
    <source>
        <dbReference type="UniProtKB" id="Q9DBG6"/>
    </source>
</evidence>
<evidence type="ECO:0000255" key="4"/>
<evidence type="ECO:0000305" key="5"/>
<protein>
    <recommendedName>
        <fullName evidence="2">Dolichyl-diphosphooligosaccharide--protein glycosyltransferase subunit 2</fullName>
    </recommendedName>
    <alternativeName>
        <fullName>Dolichyl-diphosphooligosaccharide--protein glycosyltransferase 63 kDa subunit</fullName>
    </alternativeName>
    <alternativeName>
        <fullName>Ribophorin II</fullName>
        <shortName>RPN-II</shortName>
    </alternativeName>
    <alternativeName>
        <fullName>Ribophorin-2</fullName>
    </alternativeName>
</protein>
<accession>Q9GL01</accession>
<organism>
    <name type="scientific">Sus scrofa</name>
    <name type="common">Pig</name>
    <dbReference type="NCBI Taxonomy" id="9823"/>
    <lineage>
        <taxon>Eukaryota</taxon>
        <taxon>Metazoa</taxon>
        <taxon>Chordata</taxon>
        <taxon>Craniata</taxon>
        <taxon>Vertebrata</taxon>
        <taxon>Euteleostomi</taxon>
        <taxon>Mammalia</taxon>
        <taxon>Eutheria</taxon>
        <taxon>Laurasiatheria</taxon>
        <taxon>Artiodactyla</taxon>
        <taxon>Suina</taxon>
        <taxon>Suidae</taxon>
        <taxon>Sus</taxon>
    </lineage>
</organism>
<reference key="1">
    <citation type="journal article" date="2000" name="Glycoconj. J.">
        <title>The oligosaccharyltransferase complex from pig liver: cDNA cloning, expression and functional characterisation.</title>
        <authorList>
            <person name="Hardt B."/>
            <person name="Aparicio R."/>
            <person name="Bause E."/>
        </authorList>
    </citation>
    <scope>NUCLEOTIDE SEQUENCE [MRNA]</scope>
</reference>
<sequence>MAPPGSRTVLLLALTIIARTQALKPTHYLTKHDVERLKASLDRPFTSLESAFYSIVGLSSLGAQVPDEKKACTFIKSNLDPSNVDSLFYPPQSSQALSGCEISISNETKDLLLAAVSEDSSVTQIYHAVAALSGFGLPLASQEALGALTARLSKEETVLATVQALQTASYLSQQADLRSIVEEIEDLVARLDELGGVYLQFEEGLLETTALFVAATYKLMDHEGTEPSIKEDQVIQLMNTIFSKKNFESLPEAFSVASAAAALSQNRYHVPVVVVPEGSPSDTQEQAFLRLQVTNVLSQPLTQATVKLEHAKSVASRATVLQKTSFTPVGDVFELNFVNVKFSSGYYDFSVKVEGDNRYIANTVELRVKISTEVGITNVDLSTVDKDQSIAPKTTRVTYPAKAKGPFIADSPQNFALFFQLVDVNTGAELTPHQTFVRLHNQKTGQEVVFVAEPDSKNVYRFELDTSERKIEFDSASGTYTLYLIIGDATLKNPIHWNVADVVIRFPEEDAPSTVLSKNLFTAKQEIQHLFRDPEKRPPTVVSNTFTGLILSPLLLLFALWIRIGAKISNFTFGLTIIFHLGHAMLAMYVYWTQLNMFQTLKYLAILGSVTFLAGNRMLAQQAIKRTAH</sequence>
<proteinExistence type="evidence at transcript level"/>
<feature type="signal peptide" evidence="4">
    <location>
        <begin position="1"/>
        <end position="22"/>
    </location>
</feature>
<feature type="chain" id="PRO_5000066372" description="Dolichyl-diphosphooligosaccharide--protein glycosyltransferase subunit 2">
    <location>
        <begin position="23"/>
        <end position="629"/>
    </location>
</feature>
<feature type="topological domain" description="Lumenal" evidence="4">
    <location>
        <begin position="23"/>
        <end position="541"/>
    </location>
</feature>
<feature type="transmembrane region" description="Helical" evidence="4">
    <location>
        <begin position="542"/>
        <end position="562"/>
    </location>
</feature>
<feature type="topological domain" description="Cytoplasmic" evidence="4">
    <location>
        <begin position="563"/>
        <end position="570"/>
    </location>
</feature>
<feature type="transmembrane region" description="Helical" evidence="4">
    <location>
        <begin position="571"/>
        <end position="591"/>
    </location>
</feature>
<feature type="topological domain" description="Lumenal" evidence="4">
    <location>
        <begin position="592"/>
        <end position="594"/>
    </location>
</feature>
<feature type="transmembrane region" description="Helical" evidence="4">
    <location>
        <begin position="595"/>
        <end position="615"/>
    </location>
</feature>
<feature type="topological domain" description="Cytoplasmic" evidence="4">
    <location>
        <begin position="616"/>
        <end position="629"/>
    </location>
</feature>
<feature type="glycosylation site" description="N-linked (GlcNAc...) asparagine" evidence="4">
    <location>
        <position position="106"/>
    </location>
</feature>
<feature type="cross-link" description="Glycyl lysine isopeptide (Lys-Gly) (interchain with G-Cter in ubiquitin)" evidence="2">
    <location>
        <position position="154"/>
    </location>
</feature>
<comment type="function">
    <text evidence="1">Subunit of the oligosaccharyl transferase (OST) complex that catalyzes the initial transfer of a defined glycan (Glc(3)Man(9)GlcNAc(2) in eukaryotes) from the lipid carrier dolichol-pyrophosphate to an asparagine residue within an Asn-X-Ser/Thr consensus motif in nascent polypeptide chains, the first step in protein N-glycosylation. N-glycosylation occurs cotranslationally and the complex associates with the Sec61 complex at the channel-forming translocon complex that mediates protein translocation across the endoplasmic reticulum (ER). All subunits are required for a maximal enzyme activity.</text>
</comment>
<comment type="pathway">
    <text evidence="2">Protein modification; protein glycosylation.</text>
</comment>
<comment type="subunit">
    <text evidence="1 2 3">Component of the oligosaccharyltransferase (OST) complex (By similarity). OST exists in two different complex forms which contain common core subunits RPN1, RPN2, OST48, OST4, DAD1 and TMEM258, either STT3A or STT3B as catalytic subunits, and form-specific accessory subunits (By similarity). STT3A complex assembly occurs through the formation of 3 subcomplexes. Subcomplex 1 contains RPN1 and TMEM258, subcomplex 2 contains the STT3A-specific subunits STT3A, DC2/OSTC, and KCP2 as well as the core subunit OST4, and subcomplex 3 contains RPN2, DAD1, and OST48. The STT3A complex can form stable complexes with the Sec61 complex or with both the Sec61 and TRAP complexes. Interacts with DDI2 (By similarity). Interacts with TMEM35A/NACHO (By similarity).</text>
</comment>
<comment type="subcellular location">
    <subcellularLocation>
        <location evidence="1">Endoplasmic reticulum</location>
    </subcellularLocation>
    <subcellularLocation>
        <location>Endoplasmic reticulum membrane</location>
        <topology evidence="5">Multi-pass membrane protein</topology>
    </subcellularLocation>
</comment>
<comment type="similarity">
    <text evidence="5">Belongs to the SWP1 family.</text>
</comment>